<dbReference type="EC" id="1.3.1.98"/>
<dbReference type="EMBL" id="AJ235271">
    <property type="protein sequence ID" value="CAA14710.1"/>
    <property type="status" value="ALT_INIT"/>
    <property type="molecule type" value="Genomic_DNA"/>
</dbReference>
<dbReference type="PIR" id="D71679">
    <property type="entry name" value="D71679"/>
</dbReference>
<dbReference type="RefSeq" id="NP_220633.1">
    <property type="nucleotide sequence ID" value="NC_000963.1"/>
</dbReference>
<dbReference type="RefSeq" id="WP_004598530.1">
    <property type="nucleotide sequence ID" value="NC_000963.1"/>
</dbReference>
<dbReference type="SMR" id="Q9ZDS7"/>
<dbReference type="STRING" id="272947.gene:17555329"/>
<dbReference type="EnsemblBacteria" id="CAA14710">
    <property type="protein sequence ID" value="CAA14710"/>
    <property type="gene ID" value="CAA14710"/>
</dbReference>
<dbReference type="GeneID" id="57569376"/>
<dbReference type="KEGG" id="rpr:RP248"/>
<dbReference type="PATRIC" id="fig|272947.5.peg.255"/>
<dbReference type="eggNOG" id="COG0812">
    <property type="taxonomic scope" value="Bacteria"/>
</dbReference>
<dbReference type="HOGENOM" id="CLU_035304_1_0_5"/>
<dbReference type="OrthoDB" id="9804753at2"/>
<dbReference type="UniPathway" id="UPA00219"/>
<dbReference type="Proteomes" id="UP000002480">
    <property type="component" value="Chromosome"/>
</dbReference>
<dbReference type="GO" id="GO:0005829">
    <property type="term" value="C:cytosol"/>
    <property type="evidence" value="ECO:0007669"/>
    <property type="project" value="TreeGrafter"/>
</dbReference>
<dbReference type="GO" id="GO:0071949">
    <property type="term" value="F:FAD binding"/>
    <property type="evidence" value="ECO:0007669"/>
    <property type="project" value="InterPro"/>
</dbReference>
<dbReference type="GO" id="GO:0008762">
    <property type="term" value="F:UDP-N-acetylmuramate dehydrogenase activity"/>
    <property type="evidence" value="ECO:0007669"/>
    <property type="project" value="UniProtKB-UniRule"/>
</dbReference>
<dbReference type="GO" id="GO:0051301">
    <property type="term" value="P:cell division"/>
    <property type="evidence" value="ECO:0007669"/>
    <property type="project" value="UniProtKB-KW"/>
</dbReference>
<dbReference type="GO" id="GO:0071555">
    <property type="term" value="P:cell wall organization"/>
    <property type="evidence" value="ECO:0007669"/>
    <property type="project" value="UniProtKB-KW"/>
</dbReference>
<dbReference type="GO" id="GO:0009252">
    <property type="term" value="P:peptidoglycan biosynthetic process"/>
    <property type="evidence" value="ECO:0007669"/>
    <property type="project" value="UniProtKB-UniRule"/>
</dbReference>
<dbReference type="GO" id="GO:0008360">
    <property type="term" value="P:regulation of cell shape"/>
    <property type="evidence" value="ECO:0007669"/>
    <property type="project" value="UniProtKB-KW"/>
</dbReference>
<dbReference type="Gene3D" id="3.30.465.10">
    <property type="match status" value="1"/>
</dbReference>
<dbReference type="Gene3D" id="3.90.78.10">
    <property type="entry name" value="UDP-N-acetylenolpyruvoylglucosamine reductase, C-terminal domain"/>
    <property type="match status" value="1"/>
</dbReference>
<dbReference type="Gene3D" id="3.30.43.10">
    <property type="entry name" value="Uridine Diphospho-n-acetylenolpyruvylglucosamine Reductase, domain 2"/>
    <property type="match status" value="1"/>
</dbReference>
<dbReference type="HAMAP" id="MF_00037">
    <property type="entry name" value="MurB"/>
    <property type="match status" value="1"/>
</dbReference>
<dbReference type="InterPro" id="IPR016166">
    <property type="entry name" value="FAD-bd_PCMH"/>
</dbReference>
<dbReference type="InterPro" id="IPR036318">
    <property type="entry name" value="FAD-bd_PCMH-like_sf"/>
</dbReference>
<dbReference type="InterPro" id="IPR016167">
    <property type="entry name" value="FAD-bd_PCMH_sub1"/>
</dbReference>
<dbReference type="InterPro" id="IPR016169">
    <property type="entry name" value="FAD-bd_PCMH_sub2"/>
</dbReference>
<dbReference type="InterPro" id="IPR003170">
    <property type="entry name" value="MurB"/>
</dbReference>
<dbReference type="InterPro" id="IPR011601">
    <property type="entry name" value="MurB_C"/>
</dbReference>
<dbReference type="InterPro" id="IPR036635">
    <property type="entry name" value="MurB_C_sf"/>
</dbReference>
<dbReference type="InterPro" id="IPR006094">
    <property type="entry name" value="Oxid_FAD_bind_N"/>
</dbReference>
<dbReference type="NCBIfam" id="TIGR00179">
    <property type="entry name" value="murB"/>
    <property type="match status" value="1"/>
</dbReference>
<dbReference type="NCBIfam" id="NF010480">
    <property type="entry name" value="PRK13905.1"/>
    <property type="match status" value="1"/>
</dbReference>
<dbReference type="PANTHER" id="PTHR21071">
    <property type="entry name" value="UDP-N-ACETYLENOLPYRUVOYLGLUCOSAMINE REDUCTASE"/>
    <property type="match status" value="1"/>
</dbReference>
<dbReference type="PANTHER" id="PTHR21071:SF4">
    <property type="entry name" value="UDP-N-ACETYLENOLPYRUVOYLGLUCOSAMINE REDUCTASE"/>
    <property type="match status" value="1"/>
</dbReference>
<dbReference type="Pfam" id="PF01565">
    <property type="entry name" value="FAD_binding_4"/>
    <property type="match status" value="1"/>
</dbReference>
<dbReference type="Pfam" id="PF02873">
    <property type="entry name" value="MurB_C"/>
    <property type="match status" value="1"/>
</dbReference>
<dbReference type="SUPFAM" id="SSF56176">
    <property type="entry name" value="FAD-binding/transporter-associated domain-like"/>
    <property type="match status" value="1"/>
</dbReference>
<dbReference type="SUPFAM" id="SSF56194">
    <property type="entry name" value="Uridine diphospho-N-Acetylenolpyruvylglucosamine reductase, MurB, C-terminal domain"/>
    <property type="match status" value="1"/>
</dbReference>
<dbReference type="PROSITE" id="PS51387">
    <property type="entry name" value="FAD_PCMH"/>
    <property type="match status" value="1"/>
</dbReference>
<proteinExistence type="inferred from homology"/>
<organism>
    <name type="scientific">Rickettsia prowazekii (strain Madrid E)</name>
    <dbReference type="NCBI Taxonomy" id="272947"/>
    <lineage>
        <taxon>Bacteria</taxon>
        <taxon>Pseudomonadati</taxon>
        <taxon>Pseudomonadota</taxon>
        <taxon>Alphaproteobacteria</taxon>
        <taxon>Rickettsiales</taxon>
        <taxon>Rickettsiaceae</taxon>
        <taxon>Rickettsieae</taxon>
        <taxon>Rickettsia</taxon>
        <taxon>typhus group</taxon>
    </lineage>
</organism>
<feature type="chain" id="PRO_0000179251" description="UDP-N-acetylenolpyruvoylglucosamine reductase">
    <location>
        <begin position="1"/>
        <end position="295"/>
    </location>
</feature>
<feature type="domain" description="FAD-binding PCMH-type">
    <location>
        <begin position="24"/>
        <end position="188"/>
    </location>
</feature>
<feature type="active site" evidence="1">
    <location>
        <position position="168"/>
    </location>
</feature>
<feature type="active site" description="Proton donor" evidence="1">
    <location>
        <position position="217"/>
    </location>
</feature>
<feature type="active site" evidence="1">
    <location>
        <position position="287"/>
    </location>
</feature>
<sequence length="295" mass="32752">MSILPIIKGEYKKDYNLKHLTWFKVGGNAEIFFKPFDFADLKSFLIQNKQKLPITTFGSGSNIIIRDGGIEGVVIKLGQNFNKIEFLDNHLIVGSSCLNYNLARFCQANAISGFEFLVGIPGTIGGGVIMNAGAYGSAFQDIIVQVEALDFSGNFLTFTNKEIGFKYRGNNLPKDLILLKAVFKVNKGDSQNILLKMNKINNTRSSTQPIKERTGGSTFINPEGRKSWELIDKAGLRGYRIGGASISELHCNFMINNGNATAKDLEDLGNFVRQKVFEDSGVELNWEIKRIGKYV</sequence>
<evidence type="ECO:0000250" key="1"/>
<evidence type="ECO:0000305" key="2"/>
<reference key="1">
    <citation type="journal article" date="1998" name="Nature">
        <title>The genome sequence of Rickettsia prowazekii and the origin of mitochondria.</title>
        <authorList>
            <person name="Andersson S.G.E."/>
            <person name="Zomorodipour A."/>
            <person name="Andersson J.O."/>
            <person name="Sicheritz-Ponten T."/>
            <person name="Alsmark U.C.M."/>
            <person name="Podowski R.M."/>
            <person name="Naeslund A.K."/>
            <person name="Eriksson A.-S."/>
            <person name="Winkler H.H."/>
            <person name="Kurland C.G."/>
        </authorList>
    </citation>
    <scope>NUCLEOTIDE SEQUENCE [LARGE SCALE GENOMIC DNA]</scope>
    <source>
        <strain>Madrid E</strain>
    </source>
</reference>
<accession>Q9ZDS7</accession>
<protein>
    <recommendedName>
        <fullName>UDP-N-acetylenolpyruvoylglucosamine reductase</fullName>
        <ecNumber>1.3.1.98</ecNumber>
    </recommendedName>
    <alternativeName>
        <fullName>UDP-N-acetylmuramate dehydrogenase</fullName>
    </alternativeName>
</protein>
<gene>
    <name type="primary">murB</name>
    <name type="ordered locus">RP248</name>
</gene>
<keyword id="KW-0131">Cell cycle</keyword>
<keyword id="KW-0132">Cell division</keyword>
<keyword id="KW-0133">Cell shape</keyword>
<keyword id="KW-0961">Cell wall biogenesis/degradation</keyword>
<keyword id="KW-0963">Cytoplasm</keyword>
<keyword id="KW-0274">FAD</keyword>
<keyword id="KW-0285">Flavoprotein</keyword>
<keyword id="KW-0521">NADP</keyword>
<keyword id="KW-0560">Oxidoreductase</keyword>
<keyword id="KW-0573">Peptidoglycan synthesis</keyword>
<keyword id="KW-1185">Reference proteome</keyword>
<name>MURB_RICPR</name>
<comment type="function">
    <text evidence="1">Cell wall formation.</text>
</comment>
<comment type="catalytic activity">
    <reaction>
        <text>UDP-N-acetyl-alpha-D-muramate + NADP(+) = UDP-N-acetyl-3-O-(1-carboxyvinyl)-alpha-D-glucosamine + NADPH + H(+)</text>
        <dbReference type="Rhea" id="RHEA:12248"/>
        <dbReference type="ChEBI" id="CHEBI:15378"/>
        <dbReference type="ChEBI" id="CHEBI:57783"/>
        <dbReference type="ChEBI" id="CHEBI:58349"/>
        <dbReference type="ChEBI" id="CHEBI:68483"/>
        <dbReference type="ChEBI" id="CHEBI:70757"/>
        <dbReference type="EC" id="1.3.1.98"/>
    </reaction>
</comment>
<comment type="cofactor">
    <cofactor evidence="1">
        <name>FAD</name>
        <dbReference type="ChEBI" id="CHEBI:57692"/>
    </cofactor>
</comment>
<comment type="pathway">
    <text>Cell wall biogenesis; peptidoglycan biosynthesis.</text>
</comment>
<comment type="subcellular location">
    <subcellularLocation>
        <location evidence="1">Cytoplasm</location>
    </subcellularLocation>
</comment>
<comment type="similarity">
    <text evidence="2">Belongs to the MurB family.</text>
</comment>
<comment type="sequence caution" evidence="2">
    <conflict type="erroneous initiation">
        <sequence resource="EMBL-CDS" id="CAA14710"/>
    </conflict>
</comment>